<name>Y2916_YERPA</name>
<proteinExistence type="inferred from homology"/>
<evidence type="ECO:0000255" key="1">
    <source>
        <dbReference type="HAMAP-Rule" id="MF_01053"/>
    </source>
</evidence>
<reference key="1">
    <citation type="journal article" date="2006" name="J. Bacteriol.">
        <title>Complete genome sequence of Yersinia pestis strains Antiqua and Nepal516: evidence of gene reduction in an emerging pathogen.</title>
        <authorList>
            <person name="Chain P.S.G."/>
            <person name="Hu P."/>
            <person name="Malfatti S.A."/>
            <person name="Radnedge L."/>
            <person name="Larimer F."/>
            <person name="Vergez L.M."/>
            <person name="Worsham P."/>
            <person name="Chu M.C."/>
            <person name="Andersen G.L."/>
        </authorList>
    </citation>
    <scope>NUCLEOTIDE SEQUENCE [LARGE SCALE GENOMIC DNA]</scope>
    <source>
        <strain>Antiqua</strain>
    </source>
</reference>
<gene>
    <name type="ordered locus">YPA_2916</name>
</gene>
<feature type="chain" id="PRO_1000064376" description="UPF0231 protein YPA_2916">
    <location>
        <begin position="1"/>
        <end position="119"/>
    </location>
</feature>
<dbReference type="EMBL" id="CP000308">
    <property type="protein sequence ID" value="ABG14878.1"/>
    <property type="molecule type" value="Genomic_DNA"/>
</dbReference>
<dbReference type="SMR" id="Q1C3U4"/>
<dbReference type="KEGG" id="ypa:YPA_2916"/>
<dbReference type="Proteomes" id="UP000001971">
    <property type="component" value="Chromosome"/>
</dbReference>
<dbReference type="HAMAP" id="MF_01053">
    <property type="entry name" value="UPF0231"/>
    <property type="match status" value="1"/>
</dbReference>
<dbReference type="InterPro" id="IPR008249">
    <property type="entry name" value="UPF0231"/>
</dbReference>
<dbReference type="NCBIfam" id="NF003574">
    <property type="entry name" value="PRK05248.1-1"/>
    <property type="match status" value="1"/>
</dbReference>
<dbReference type="NCBIfam" id="NF003576">
    <property type="entry name" value="PRK05248.1-3"/>
    <property type="match status" value="1"/>
</dbReference>
<dbReference type="Pfam" id="PF06062">
    <property type="entry name" value="UPF0231"/>
    <property type="match status" value="1"/>
</dbReference>
<dbReference type="PIRSF" id="PIRSF006287">
    <property type="entry name" value="UCP006287"/>
    <property type="match status" value="1"/>
</dbReference>
<comment type="similarity">
    <text evidence="1">Belongs to the UPF0231 family.</text>
</comment>
<organism>
    <name type="scientific">Yersinia pestis bv. Antiqua (strain Antiqua)</name>
    <dbReference type="NCBI Taxonomy" id="360102"/>
    <lineage>
        <taxon>Bacteria</taxon>
        <taxon>Pseudomonadati</taxon>
        <taxon>Pseudomonadota</taxon>
        <taxon>Gammaproteobacteria</taxon>
        <taxon>Enterobacterales</taxon>
        <taxon>Yersiniaceae</taxon>
        <taxon>Yersinia</taxon>
    </lineage>
</organism>
<sequence length="119" mass="13772">MDYEFLRDLTGQVLVKFSMGHEVIGHWLNEEIKGDLVKLDHIETAADGVRGSERQWQLPGHEYTLWLDGEEVMVRANQLDLDGDEMEEGMNYYDEESLCLCGLEDFLLVLKGYRAFITQ</sequence>
<protein>
    <recommendedName>
        <fullName evidence="1">UPF0231 protein YPA_2916</fullName>
    </recommendedName>
</protein>
<accession>Q1C3U4</accession>